<sequence length="265" mass="28677">MSFPYFISPEQAMRERSELARKGIARGRSVVALAYAGGVLFVAENPSRSLQKISELYDRVGFAAAGKFNEFDNLRRGGIQFADTRGYAYDRRDVTGRQLANVYAQTLGTIFTEQAKPYEVELCVAEVAHYGETKPPELYRITYDGSINDEPHFMVMGGTTESIANALKESYAENASLTDALGIAVAALRAGSADAAGSDQPTLGVASLEVAVLDANRPRRAFRRIIGSGLEALLREKDSKGSKGAQNPKGARDSKNSKSYGESTD</sequence>
<gene>
    <name evidence="1" type="primary">prcA</name>
    <name type="ordered locus">MLBr01323</name>
</gene>
<comment type="function">
    <text evidence="1">Component of the proteasome core, a large protease complex with broad specificity involved in protein degradation.</text>
</comment>
<comment type="activity regulation">
    <text evidence="1">The formation of the proteasomal ATPase ARC-20S proteasome complex, likely via the docking of the C-termini of ARC into the intersubunit pockets in the alpha-rings, may trigger opening of the gate for substrate entry. Interconversion between the open-gate and close-gate conformations leads to a dynamic regulation of the 20S proteasome proteolysis activity.</text>
</comment>
<comment type="pathway">
    <text evidence="1">Protein degradation; proteasomal Pup-dependent pathway.</text>
</comment>
<comment type="subunit">
    <text evidence="1">The 20S proteasome core is composed of 14 alpha and 14 beta subunits that assemble into four stacked heptameric rings, resulting in a barrel-shaped structure. The two inner rings, each composed of seven catalytic beta subunits, are sandwiched by two outer rings, each composed of seven alpha subunits. The catalytic chamber with the active sites is on the inside of the barrel. Has a gated structure, the ends of the cylinder being occluded by the N-termini of the alpha-subunits. Is capped by the proteasome-associated ATPase, ARC.</text>
</comment>
<comment type="subcellular location">
    <subcellularLocation>
        <location evidence="1">Cytoplasm</location>
    </subcellularLocation>
</comment>
<comment type="similarity">
    <text evidence="1">Belongs to the peptidase T1A family.</text>
</comment>
<organism>
    <name type="scientific">Mycobacterium leprae (strain Br4923)</name>
    <dbReference type="NCBI Taxonomy" id="561304"/>
    <lineage>
        <taxon>Bacteria</taxon>
        <taxon>Bacillati</taxon>
        <taxon>Actinomycetota</taxon>
        <taxon>Actinomycetes</taxon>
        <taxon>Mycobacteriales</taxon>
        <taxon>Mycobacteriaceae</taxon>
        <taxon>Mycobacterium</taxon>
    </lineage>
</organism>
<proteinExistence type="inferred from homology"/>
<feature type="chain" id="PRO_0000397152" description="Proteasome subunit alpha">
    <location>
        <begin position="1"/>
        <end position="265"/>
    </location>
</feature>
<feature type="region of interest" description="Disordered" evidence="2">
    <location>
        <begin position="236"/>
        <end position="265"/>
    </location>
</feature>
<protein>
    <recommendedName>
        <fullName evidence="1">Proteasome subunit alpha</fullName>
    </recommendedName>
    <alternativeName>
        <fullName evidence="1">20S proteasome alpha subunit</fullName>
    </alternativeName>
    <alternativeName>
        <fullName evidence="1">Proteasome core protein PrcA</fullName>
    </alternativeName>
</protein>
<dbReference type="EMBL" id="FM211192">
    <property type="protein sequence ID" value="CAR71418.1"/>
    <property type="molecule type" value="Genomic_DNA"/>
</dbReference>
<dbReference type="SMR" id="B8ZRF4"/>
<dbReference type="KEGG" id="mlb:MLBr01323"/>
<dbReference type="HOGENOM" id="CLU_071031_0_0_11"/>
<dbReference type="UniPathway" id="UPA00997"/>
<dbReference type="Proteomes" id="UP000006900">
    <property type="component" value="Chromosome"/>
</dbReference>
<dbReference type="GO" id="GO:0005737">
    <property type="term" value="C:cytoplasm"/>
    <property type="evidence" value="ECO:0007669"/>
    <property type="project" value="UniProtKB-SubCell"/>
</dbReference>
<dbReference type="GO" id="GO:0019773">
    <property type="term" value="C:proteasome core complex, alpha-subunit complex"/>
    <property type="evidence" value="ECO:0007669"/>
    <property type="project" value="UniProtKB-UniRule"/>
</dbReference>
<dbReference type="GO" id="GO:0004298">
    <property type="term" value="F:threonine-type endopeptidase activity"/>
    <property type="evidence" value="ECO:0007669"/>
    <property type="project" value="InterPro"/>
</dbReference>
<dbReference type="GO" id="GO:0019941">
    <property type="term" value="P:modification-dependent protein catabolic process"/>
    <property type="evidence" value="ECO:0007669"/>
    <property type="project" value="UniProtKB-UniRule"/>
</dbReference>
<dbReference type="GO" id="GO:0010498">
    <property type="term" value="P:proteasomal protein catabolic process"/>
    <property type="evidence" value="ECO:0007669"/>
    <property type="project" value="UniProtKB-UniRule"/>
</dbReference>
<dbReference type="CDD" id="cd01906">
    <property type="entry name" value="proteasome_protease_HslV"/>
    <property type="match status" value="1"/>
</dbReference>
<dbReference type="FunFam" id="3.60.20.10:FF:000023">
    <property type="entry name" value="Proteasome subunit alpha"/>
    <property type="match status" value="1"/>
</dbReference>
<dbReference type="Gene3D" id="3.60.20.10">
    <property type="entry name" value="Glutamine Phosphoribosylpyrophosphate, subunit 1, domain 1"/>
    <property type="match status" value="1"/>
</dbReference>
<dbReference type="HAMAP" id="MF_00289_B">
    <property type="entry name" value="Proteasome_A_B"/>
    <property type="match status" value="1"/>
</dbReference>
<dbReference type="InterPro" id="IPR029055">
    <property type="entry name" value="Ntn_hydrolases_N"/>
</dbReference>
<dbReference type="InterPro" id="IPR050115">
    <property type="entry name" value="Proteasome_alpha"/>
</dbReference>
<dbReference type="InterPro" id="IPR023332">
    <property type="entry name" value="Proteasome_alpha-type"/>
</dbReference>
<dbReference type="InterPro" id="IPR022296">
    <property type="entry name" value="Proteasome_asu_bac"/>
</dbReference>
<dbReference type="InterPro" id="IPR001353">
    <property type="entry name" value="Proteasome_sua/b"/>
</dbReference>
<dbReference type="NCBIfam" id="TIGR03691">
    <property type="entry name" value="20S_bact_alpha"/>
    <property type="match status" value="1"/>
</dbReference>
<dbReference type="PANTHER" id="PTHR11599">
    <property type="entry name" value="PROTEASOME SUBUNIT ALPHA/BETA"/>
    <property type="match status" value="1"/>
</dbReference>
<dbReference type="Pfam" id="PF00227">
    <property type="entry name" value="Proteasome"/>
    <property type="match status" value="1"/>
</dbReference>
<dbReference type="SUPFAM" id="SSF56235">
    <property type="entry name" value="N-terminal nucleophile aminohydrolases (Ntn hydrolases)"/>
    <property type="match status" value="1"/>
</dbReference>
<dbReference type="PROSITE" id="PS51475">
    <property type="entry name" value="PROTEASOME_ALPHA_2"/>
    <property type="match status" value="1"/>
</dbReference>
<keyword id="KW-0963">Cytoplasm</keyword>
<keyword id="KW-0647">Proteasome</keyword>
<evidence type="ECO:0000255" key="1">
    <source>
        <dbReference type="HAMAP-Rule" id="MF_00289"/>
    </source>
</evidence>
<evidence type="ECO:0000256" key="2">
    <source>
        <dbReference type="SAM" id="MobiDB-lite"/>
    </source>
</evidence>
<name>PSA_MYCLB</name>
<reference key="1">
    <citation type="journal article" date="2009" name="Nat. Genet.">
        <title>Comparative genomic and phylogeographic analysis of Mycobacterium leprae.</title>
        <authorList>
            <person name="Monot M."/>
            <person name="Honore N."/>
            <person name="Garnier T."/>
            <person name="Zidane N."/>
            <person name="Sherafi D."/>
            <person name="Paniz-Mondolfi A."/>
            <person name="Matsuoka M."/>
            <person name="Taylor G.M."/>
            <person name="Donoghue H.D."/>
            <person name="Bouwman A."/>
            <person name="Mays S."/>
            <person name="Watson C."/>
            <person name="Lockwood D."/>
            <person name="Khamispour A."/>
            <person name="Dowlati Y."/>
            <person name="Jianping S."/>
            <person name="Rea T.H."/>
            <person name="Vera-Cabrera L."/>
            <person name="Stefani M.M."/>
            <person name="Banu S."/>
            <person name="Macdonald M."/>
            <person name="Sapkota B.R."/>
            <person name="Spencer J.S."/>
            <person name="Thomas J."/>
            <person name="Harshman K."/>
            <person name="Singh P."/>
            <person name="Busso P."/>
            <person name="Gattiker A."/>
            <person name="Rougemont J."/>
            <person name="Brennan P.J."/>
            <person name="Cole S.T."/>
        </authorList>
    </citation>
    <scope>NUCLEOTIDE SEQUENCE [LARGE SCALE GENOMIC DNA]</scope>
    <source>
        <strain>Br4923</strain>
    </source>
</reference>
<accession>B8ZRF4</accession>